<reference key="1">
    <citation type="submission" date="1999-06" db="EMBL/GenBank/DDBJ databases">
        <title>A molecular phylogeny of ground squirrels and prairie dogs.</title>
        <authorList>
            <person name="Harrison R.G."/>
            <person name="Sherman P.W."/>
            <person name="Yensen E."/>
            <person name="Hoffmann R.S."/>
            <person name="Bogdanowicz S.M."/>
        </authorList>
    </citation>
    <scope>NUCLEOTIDE SEQUENCE [GENOMIC DNA]</scope>
    <source>
        <strain>Isolate S66</strain>
        <strain>Isolate S67</strain>
    </source>
</reference>
<gene>
    <name type="primary">MT-CYB</name>
    <name type="synonym">COB</name>
    <name type="synonym">CYTB</name>
    <name type="synonym">MTCYB</name>
</gene>
<keyword id="KW-0249">Electron transport</keyword>
<keyword id="KW-0349">Heme</keyword>
<keyword id="KW-0408">Iron</keyword>
<keyword id="KW-0472">Membrane</keyword>
<keyword id="KW-0479">Metal-binding</keyword>
<keyword id="KW-0496">Mitochondrion</keyword>
<keyword id="KW-0999">Mitochondrion inner membrane</keyword>
<keyword id="KW-0679">Respiratory chain</keyword>
<keyword id="KW-0812">Transmembrane</keyword>
<keyword id="KW-1133">Transmembrane helix</keyword>
<keyword id="KW-0813">Transport</keyword>
<keyword id="KW-0830">Ubiquinone</keyword>
<organism>
    <name type="scientific">Otospermophilus beecheyi</name>
    <name type="common">California ground squirrel</name>
    <name type="synonym">Spermophilus beecheyi</name>
    <dbReference type="NCBI Taxonomy" id="34862"/>
    <lineage>
        <taxon>Eukaryota</taxon>
        <taxon>Metazoa</taxon>
        <taxon>Chordata</taxon>
        <taxon>Craniata</taxon>
        <taxon>Vertebrata</taxon>
        <taxon>Euteleostomi</taxon>
        <taxon>Mammalia</taxon>
        <taxon>Eutheria</taxon>
        <taxon>Euarchontoglires</taxon>
        <taxon>Glires</taxon>
        <taxon>Rodentia</taxon>
        <taxon>Sciuromorpha</taxon>
        <taxon>Sciuridae</taxon>
        <taxon>Xerinae</taxon>
        <taxon>Marmotini</taxon>
        <taxon>Otospermophilus</taxon>
    </lineage>
</organism>
<accession>Q9T469</accession>
<protein>
    <recommendedName>
        <fullName>Cytochrome b</fullName>
    </recommendedName>
    <alternativeName>
        <fullName>Complex III subunit 3</fullName>
    </alternativeName>
    <alternativeName>
        <fullName>Complex III subunit III</fullName>
    </alternativeName>
    <alternativeName>
        <fullName>Cytochrome b-c1 complex subunit 3</fullName>
    </alternativeName>
    <alternativeName>
        <fullName>Ubiquinol-cytochrome-c reductase complex cytochrome b subunit</fullName>
    </alternativeName>
</protein>
<dbReference type="EMBL" id="AF157918">
    <property type="protein sequence ID" value="AAD50202.1"/>
    <property type="molecule type" value="Genomic_DNA"/>
</dbReference>
<dbReference type="EMBL" id="AF157919">
    <property type="protein sequence ID" value="AAD50203.1"/>
    <property type="molecule type" value="Genomic_DNA"/>
</dbReference>
<dbReference type="SMR" id="Q9T469"/>
<dbReference type="GO" id="GO:0005743">
    <property type="term" value="C:mitochondrial inner membrane"/>
    <property type="evidence" value="ECO:0007669"/>
    <property type="project" value="UniProtKB-SubCell"/>
</dbReference>
<dbReference type="GO" id="GO:0045275">
    <property type="term" value="C:respiratory chain complex III"/>
    <property type="evidence" value="ECO:0007669"/>
    <property type="project" value="InterPro"/>
</dbReference>
<dbReference type="GO" id="GO:0046872">
    <property type="term" value="F:metal ion binding"/>
    <property type="evidence" value="ECO:0007669"/>
    <property type="project" value="UniProtKB-KW"/>
</dbReference>
<dbReference type="GO" id="GO:0008121">
    <property type="term" value="F:ubiquinol-cytochrome-c reductase activity"/>
    <property type="evidence" value="ECO:0007669"/>
    <property type="project" value="InterPro"/>
</dbReference>
<dbReference type="GO" id="GO:0006122">
    <property type="term" value="P:mitochondrial electron transport, ubiquinol to cytochrome c"/>
    <property type="evidence" value="ECO:0007669"/>
    <property type="project" value="TreeGrafter"/>
</dbReference>
<dbReference type="CDD" id="cd00290">
    <property type="entry name" value="cytochrome_b_C"/>
    <property type="match status" value="1"/>
</dbReference>
<dbReference type="CDD" id="cd00284">
    <property type="entry name" value="Cytochrome_b_N"/>
    <property type="match status" value="1"/>
</dbReference>
<dbReference type="FunFam" id="1.20.810.10:FF:000002">
    <property type="entry name" value="Cytochrome b"/>
    <property type="match status" value="1"/>
</dbReference>
<dbReference type="Gene3D" id="1.20.810.10">
    <property type="entry name" value="Cytochrome Bc1 Complex, Chain C"/>
    <property type="match status" value="1"/>
</dbReference>
<dbReference type="InterPro" id="IPR005798">
    <property type="entry name" value="Cyt_b/b6_C"/>
</dbReference>
<dbReference type="InterPro" id="IPR036150">
    <property type="entry name" value="Cyt_b/b6_C_sf"/>
</dbReference>
<dbReference type="InterPro" id="IPR005797">
    <property type="entry name" value="Cyt_b/b6_N"/>
</dbReference>
<dbReference type="InterPro" id="IPR027387">
    <property type="entry name" value="Cytb/b6-like_sf"/>
</dbReference>
<dbReference type="InterPro" id="IPR030689">
    <property type="entry name" value="Cytochrome_b"/>
</dbReference>
<dbReference type="InterPro" id="IPR048260">
    <property type="entry name" value="Cytochrome_b_C_euk/bac"/>
</dbReference>
<dbReference type="InterPro" id="IPR048259">
    <property type="entry name" value="Cytochrome_b_N_euk/bac"/>
</dbReference>
<dbReference type="InterPro" id="IPR016174">
    <property type="entry name" value="Di-haem_cyt_TM"/>
</dbReference>
<dbReference type="PANTHER" id="PTHR19271">
    <property type="entry name" value="CYTOCHROME B"/>
    <property type="match status" value="1"/>
</dbReference>
<dbReference type="PANTHER" id="PTHR19271:SF16">
    <property type="entry name" value="CYTOCHROME B"/>
    <property type="match status" value="1"/>
</dbReference>
<dbReference type="Pfam" id="PF00032">
    <property type="entry name" value="Cytochrom_B_C"/>
    <property type="match status" value="1"/>
</dbReference>
<dbReference type="Pfam" id="PF00033">
    <property type="entry name" value="Cytochrome_B"/>
    <property type="match status" value="1"/>
</dbReference>
<dbReference type="PIRSF" id="PIRSF038885">
    <property type="entry name" value="COB"/>
    <property type="match status" value="1"/>
</dbReference>
<dbReference type="SUPFAM" id="SSF81648">
    <property type="entry name" value="a domain/subunit of cytochrome bc1 complex (Ubiquinol-cytochrome c reductase)"/>
    <property type="match status" value="1"/>
</dbReference>
<dbReference type="SUPFAM" id="SSF81342">
    <property type="entry name" value="Transmembrane di-heme cytochromes"/>
    <property type="match status" value="1"/>
</dbReference>
<dbReference type="PROSITE" id="PS51003">
    <property type="entry name" value="CYTB_CTER"/>
    <property type="match status" value="1"/>
</dbReference>
<dbReference type="PROSITE" id="PS51002">
    <property type="entry name" value="CYTB_NTER"/>
    <property type="match status" value="1"/>
</dbReference>
<proteinExistence type="inferred from homology"/>
<feature type="chain" id="PRO_0000061592" description="Cytochrome b">
    <location>
        <begin position="1"/>
        <end position="379"/>
    </location>
</feature>
<feature type="transmembrane region" description="Helical" evidence="2">
    <location>
        <begin position="33"/>
        <end position="53"/>
    </location>
</feature>
<feature type="transmembrane region" description="Helical" evidence="2">
    <location>
        <begin position="77"/>
        <end position="98"/>
    </location>
</feature>
<feature type="transmembrane region" description="Helical" evidence="2">
    <location>
        <begin position="113"/>
        <end position="133"/>
    </location>
</feature>
<feature type="transmembrane region" description="Helical" evidence="2">
    <location>
        <begin position="178"/>
        <end position="198"/>
    </location>
</feature>
<feature type="transmembrane region" description="Helical" evidence="2">
    <location>
        <begin position="226"/>
        <end position="246"/>
    </location>
</feature>
<feature type="transmembrane region" description="Helical" evidence="2">
    <location>
        <begin position="288"/>
        <end position="308"/>
    </location>
</feature>
<feature type="transmembrane region" description="Helical" evidence="2">
    <location>
        <begin position="320"/>
        <end position="340"/>
    </location>
</feature>
<feature type="transmembrane region" description="Helical" evidence="2">
    <location>
        <begin position="347"/>
        <end position="367"/>
    </location>
</feature>
<feature type="binding site" description="axial binding residue" evidence="2">
    <location>
        <position position="83"/>
    </location>
    <ligand>
        <name>heme b</name>
        <dbReference type="ChEBI" id="CHEBI:60344"/>
        <label>b562</label>
    </ligand>
    <ligandPart>
        <name>Fe</name>
        <dbReference type="ChEBI" id="CHEBI:18248"/>
    </ligandPart>
</feature>
<feature type="binding site" description="axial binding residue" evidence="2">
    <location>
        <position position="97"/>
    </location>
    <ligand>
        <name>heme b</name>
        <dbReference type="ChEBI" id="CHEBI:60344"/>
        <label>b566</label>
    </ligand>
    <ligandPart>
        <name>Fe</name>
        <dbReference type="ChEBI" id="CHEBI:18248"/>
    </ligandPart>
</feature>
<feature type="binding site" description="axial binding residue" evidence="2">
    <location>
        <position position="182"/>
    </location>
    <ligand>
        <name>heme b</name>
        <dbReference type="ChEBI" id="CHEBI:60344"/>
        <label>b562</label>
    </ligand>
    <ligandPart>
        <name>Fe</name>
        <dbReference type="ChEBI" id="CHEBI:18248"/>
    </ligandPart>
</feature>
<feature type="binding site" description="axial binding residue" evidence="2">
    <location>
        <position position="196"/>
    </location>
    <ligand>
        <name>heme b</name>
        <dbReference type="ChEBI" id="CHEBI:60344"/>
        <label>b566</label>
    </ligand>
    <ligandPart>
        <name>Fe</name>
        <dbReference type="ChEBI" id="CHEBI:18248"/>
    </ligandPart>
</feature>
<feature type="binding site" evidence="2">
    <location>
        <position position="201"/>
    </location>
    <ligand>
        <name>a ubiquinone</name>
        <dbReference type="ChEBI" id="CHEBI:16389"/>
    </ligand>
</feature>
<name>CYB_OTOBE</name>
<comment type="function">
    <text evidence="2">Component of the ubiquinol-cytochrome c reductase complex (complex III or cytochrome b-c1 complex) that is part of the mitochondrial respiratory chain. The b-c1 complex mediates electron transfer from ubiquinol to cytochrome c. Contributes to the generation of a proton gradient across the mitochondrial membrane that is then used for ATP synthesis.</text>
</comment>
<comment type="cofactor">
    <cofactor evidence="2">
        <name>heme b</name>
        <dbReference type="ChEBI" id="CHEBI:60344"/>
    </cofactor>
    <text evidence="2">Binds 2 heme b groups non-covalently.</text>
</comment>
<comment type="subunit">
    <text evidence="2">The cytochrome bc1 complex contains 11 subunits: 3 respiratory subunits (MT-CYB, CYC1 and UQCRFS1), 2 core proteins (UQCRC1 and UQCRC2) and 6 low-molecular weight proteins (UQCRH/QCR6, UQCRB/QCR7, UQCRQ/QCR8, UQCR10/QCR9, UQCR11/QCR10 and a cleavage product of UQCRFS1). This cytochrome bc1 complex then forms a dimer.</text>
</comment>
<comment type="subcellular location">
    <subcellularLocation>
        <location evidence="2">Mitochondrion inner membrane</location>
        <topology evidence="2">Multi-pass membrane protein</topology>
    </subcellularLocation>
</comment>
<comment type="miscellaneous">
    <text evidence="1">Heme 1 (or BL or b562) is low-potential and absorbs at about 562 nm, and heme 2 (or BH or b566) is high-potential and absorbs at about 566 nm.</text>
</comment>
<comment type="similarity">
    <text evidence="3 4">Belongs to the cytochrome b family.</text>
</comment>
<comment type="caution">
    <text evidence="2">The full-length protein contains only eight transmembrane helices, not nine as predicted by bioinformatics tools.</text>
</comment>
<sequence>MTNIRKTHPLMKIVNHSFIDLPTPSNISTWWNFGSLLGLCLTIQILTGLFLAMHYTSDTMTAFSSVTHICRDVNFGWLIRYIHANGASMFFICLFLHVGRGLYYGSYTYFETWNVGIILLFVVMATAFMGYVLPWGQMSFWGATVITNLLSAIPYIGNTLVEWIWGGFSVDKATLTRFFAFHFILPFIITALVMVHLLFLHETGSNNPSGLISDSDKIPFHPYYTIKDILGALLLILILMILVLFSPDLLGDPDNYTPANPLSTPPHIKPEWYFLFAYAILRSIPNKLGGVLALVSSILILLTFPLLHLSKQRSMMFRPLSQLMFWILVADLLTLTWIGGQPVEYPFIIIGQLASILYFTIILLILPAVSLIENKLLKW</sequence>
<geneLocation type="mitochondrion"/>
<evidence type="ECO:0000250" key="1"/>
<evidence type="ECO:0000250" key="2">
    <source>
        <dbReference type="UniProtKB" id="P00157"/>
    </source>
</evidence>
<evidence type="ECO:0000255" key="3">
    <source>
        <dbReference type="PROSITE-ProRule" id="PRU00967"/>
    </source>
</evidence>
<evidence type="ECO:0000255" key="4">
    <source>
        <dbReference type="PROSITE-ProRule" id="PRU00968"/>
    </source>
</evidence>